<comment type="similarity">
    <text evidence="1">Belongs to the universal ribosomal protein uS2 family.</text>
</comment>
<evidence type="ECO:0000255" key="1">
    <source>
        <dbReference type="HAMAP-Rule" id="MF_00291"/>
    </source>
</evidence>
<evidence type="ECO:0000256" key="2">
    <source>
        <dbReference type="SAM" id="MobiDB-lite"/>
    </source>
</evidence>
<evidence type="ECO:0000305" key="3"/>
<accession>A8F717</accession>
<proteinExistence type="inferred from homology"/>
<organism>
    <name type="scientific">Pseudothermotoga lettingae (strain ATCC BAA-301 / DSM 14385 / NBRC 107922 / TMO)</name>
    <name type="common">Thermotoga lettingae</name>
    <dbReference type="NCBI Taxonomy" id="416591"/>
    <lineage>
        <taxon>Bacteria</taxon>
        <taxon>Thermotogati</taxon>
        <taxon>Thermotogota</taxon>
        <taxon>Thermotogae</taxon>
        <taxon>Thermotogales</taxon>
        <taxon>Thermotogaceae</taxon>
        <taxon>Pseudothermotoga</taxon>
    </lineage>
</organism>
<feature type="chain" id="PRO_1000059265" description="Small ribosomal subunit protein uS2">
    <location>
        <begin position="1"/>
        <end position="266"/>
    </location>
</feature>
<feature type="region of interest" description="Disordered" evidence="2">
    <location>
        <begin position="227"/>
        <end position="266"/>
    </location>
</feature>
<feature type="compositionally biased region" description="Polar residues" evidence="2">
    <location>
        <begin position="231"/>
        <end position="240"/>
    </location>
</feature>
<feature type="compositionally biased region" description="Acidic residues" evidence="2">
    <location>
        <begin position="243"/>
        <end position="266"/>
    </location>
</feature>
<name>RS2_PSELT</name>
<sequence>MPVITMKQLLEAGVHFGHRTRRWNPKMAPYIYGARKGIYIIDLQKTLKLVEEACDFVKSKASEGATMIFVGTKKQAQHVVKEEAGKCGAFYVNNRWLGGLITNFKTIKPRIDKLIELEEMEKNGELAKLPKKEQSRLRKALEKLRKNLGGLKAMDRIPDIIYVIDPRKERIAVAEANKMGIPVIGVVDTNCDPDPVDFVIPANDDAIRSIKLITSKIAEAYLEGREGVSFTEETPSEPIQSDSSEEEEGSLDISDLFEDTDLKEEE</sequence>
<reference key="1">
    <citation type="submission" date="2007-08" db="EMBL/GenBank/DDBJ databases">
        <title>Complete sequence of Thermotoga lettingae TMO.</title>
        <authorList>
            <consortium name="US DOE Joint Genome Institute"/>
            <person name="Copeland A."/>
            <person name="Lucas S."/>
            <person name="Lapidus A."/>
            <person name="Barry K."/>
            <person name="Glavina del Rio T."/>
            <person name="Dalin E."/>
            <person name="Tice H."/>
            <person name="Pitluck S."/>
            <person name="Foster B."/>
            <person name="Bruce D."/>
            <person name="Schmutz J."/>
            <person name="Larimer F."/>
            <person name="Land M."/>
            <person name="Hauser L."/>
            <person name="Kyrpides N."/>
            <person name="Mikhailova N."/>
            <person name="Nelson K."/>
            <person name="Gogarten J.P."/>
            <person name="Noll K."/>
            <person name="Richardson P."/>
        </authorList>
    </citation>
    <scope>NUCLEOTIDE SEQUENCE [LARGE SCALE GENOMIC DNA]</scope>
    <source>
        <strain>ATCC BAA-301 / DSM 14385 / NBRC 107922 / TMO</strain>
    </source>
</reference>
<keyword id="KW-1185">Reference proteome</keyword>
<keyword id="KW-0687">Ribonucleoprotein</keyword>
<keyword id="KW-0689">Ribosomal protein</keyword>
<dbReference type="EMBL" id="CP000812">
    <property type="protein sequence ID" value="ABV33951.1"/>
    <property type="molecule type" value="Genomic_DNA"/>
</dbReference>
<dbReference type="RefSeq" id="WP_012003427.1">
    <property type="nucleotide sequence ID" value="NZ_BSDV01000001.1"/>
</dbReference>
<dbReference type="SMR" id="A8F717"/>
<dbReference type="STRING" id="416591.Tlet_1394"/>
<dbReference type="KEGG" id="tle:Tlet_1394"/>
<dbReference type="eggNOG" id="COG0052">
    <property type="taxonomic scope" value="Bacteria"/>
</dbReference>
<dbReference type="HOGENOM" id="CLU_040318_1_2_0"/>
<dbReference type="OrthoDB" id="9808036at2"/>
<dbReference type="Proteomes" id="UP000002016">
    <property type="component" value="Chromosome"/>
</dbReference>
<dbReference type="GO" id="GO:0022627">
    <property type="term" value="C:cytosolic small ribosomal subunit"/>
    <property type="evidence" value="ECO:0007669"/>
    <property type="project" value="TreeGrafter"/>
</dbReference>
<dbReference type="GO" id="GO:0003735">
    <property type="term" value="F:structural constituent of ribosome"/>
    <property type="evidence" value="ECO:0007669"/>
    <property type="project" value="InterPro"/>
</dbReference>
<dbReference type="GO" id="GO:0006412">
    <property type="term" value="P:translation"/>
    <property type="evidence" value="ECO:0007669"/>
    <property type="project" value="UniProtKB-UniRule"/>
</dbReference>
<dbReference type="CDD" id="cd01425">
    <property type="entry name" value="RPS2"/>
    <property type="match status" value="1"/>
</dbReference>
<dbReference type="FunFam" id="1.10.287.610:FF:000001">
    <property type="entry name" value="30S ribosomal protein S2"/>
    <property type="match status" value="1"/>
</dbReference>
<dbReference type="Gene3D" id="3.40.50.10490">
    <property type="entry name" value="Glucose-6-phosphate isomerase like protein, domain 1"/>
    <property type="match status" value="1"/>
</dbReference>
<dbReference type="Gene3D" id="1.10.287.610">
    <property type="entry name" value="Helix hairpin bin"/>
    <property type="match status" value="1"/>
</dbReference>
<dbReference type="HAMAP" id="MF_00291_B">
    <property type="entry name" value="Ribosomal_uS2_B"/>
    <property type="match status" value="1"/>
</dbReference>
<dbReference type="InterPro" id="IPR001865">
    <property type="entry name" value="Ribosomal_uS2"/>
</dbReference>
<dbReference type="InterPro" id="IPR005706">
    <property type="entry name" value="Ribosomal_uS2_bac/mit/plastid"/>
</dbReference>
<dbReference type="InterPro" id="IPR018130">
    <property type="entry name" value="Ribosomal_uS2_CS"/>
</dbReference>
<dbReference type="InterPro" id="IPR023591">
    <property type="entry name" value="Ribosomal_uS2_flav_dom_sf"/>
</dbReference>
<dbReference type="NCBIfam" id="TIGR01011">
    <property type="entry name" value="rpsB_bact"/>
    <property type="match status" value="1"/>
</dbReference>
<dbReference type="PANTHER" id="PTHR12534">
    <property type="entry name" value="30S RIBOSOMAL PROTEIN S2 PROKARYOTIC AND ORGANELLAR"/>
    <property type="match status" value="1"/>
</dbReference>
<dbReference type="PANTHER" id="PTHR12534:SF0">
    <property type="entry name" value="SMALL RIBOSOMAL SUBUNIT PROTEIN US2M"/>
    <property type="match status" value="1"/>
</dbReference>
<dbReference type="Pfam" id="PF00318">
    <property type="entry name" value="Ribosomal_S2"/>
    <property type="match status" value="1"/>
</dbReference>
<dbReference type="PRINTS" id="PR00395">
    <property type="entry name" value="RIBOSOMALS2"/>
</dbReference>
<dbReference type="SUPFAM" id="SSF52313">
    <property type="entry name" value="Ribosomal protein S2"/>
    <property type="match status" value="1"/>
</dbReference>
<dbReference type="PROSITE" id="PS00962">
    <property type="entry name" value="RIBOSOMAL_S2_1"/>
    <property type="match status" value="1"/>
</dbReference>
<protein>
    <recommendedName>
        <fullName evidence="1">Small ribosomal subunit protein uS2</fullName>
    </recommendedName>
    <alternativeName>
        <fullName evidence="3">30S ribosomal protein S2</fullName>
    </alternativeName>
</protein>
<gene>
    <name evidence="1" type="primary">rpsB</name>
    <name type="ordered locus">Tlet_1394</name>
</gene>